<keyword id="KW-0165">Cleavage on pair of basic residues</keyword>
<keyword id="KW-0903">Direct protein sequencing</keyword>
<keyword id="KW-1015">Disulfide bond</keyword>
<keyword id="KW-0372">Hormone</keyword>
<keyword id="KW-0964">Secreted</keyword>
<sequence length="83" mass="9293">HPITESAEMPYPGPASLEERGVGSLDDLSLSEQNYPPQRGAGLRYATLEVLLEKQSLLNPFSRVFGIRKQFAGTTECFWKYCV</sequence>
<comment type="function">
    <text>Urotensin is found in the teleost caudal neurosecretory system. It has a suggested role in osmoregulation and as a corticotropin-releasing factor. The non-hormonal portion of this precursor may be a urotensin binding protein, urophysin.</text>
</comment>
<comment type="subcellular location">
    <subcellularLocation>
        <location>Secreted</location>
    </subcellularLocation>
</comment>
<comment type="similarity">
    <text evidence="2">Belongs to the urotensin-2 family.</text>
</comment>
<organism>
    <name type="scientific">Platichthys flesus</name>
    <name type="common">European flounder</name>
    <name type="synonym">Pleuronectes flesus</name>
    <dbReference type="NCBI Taxonomy" id="8260"/>
    <lineage>
        <taxon>Eukaryota</taxon>
        <taxon>Metazoa</taxon>
        <taxon>Chordata</taxon>
        <taxon>Craniata</taxon>
        <taxon>Vertebrata</taxon>
        <taxon>Euteleostomi</taxon>
        <taxon>Actinopterygii</taxon>
        <taxon>Neopterygii</taxon>
        <taxon>Teleostei</taxon>
        <taxon>Neoteleostei</taxon>
        <taxon>Acanthomorphata</taxon>
        <taxon>Carangaria</taxon>
        <taxon>Pleuronectiformes</taxon>
        <taxon>Pleuronectoidei</taxon>
        <taxon>Pleuronectidae</taxon>
        <taxon>Platichthys</taxon>
    </lineage>
</organism>
<protein>
    <recommendedName>
        <fullName>Urotensin-2</fullName>
    </recommendedName>
    <alternativeName>
        <fullName>Urotensin II</fullName>
        <shortName>U-II</shortName>
        <shortName>UII</shortName>
    </alternativeName>
    <component>
        <recommendedName>
            <fullName>Urotensin-2 beta</fullName>
        </recommendedName>
    </component>
</protein>
<evidence type="ECO:0000255" key="1"/>
<evidence type="ECO:0000305" key="2"/>
<name>UTS2_PLAFE</name>
<feature type="chain" id="PRO_0000036341" description="Urotensin-2" evidence="1">
    <location>
        <begin position="1"/>
        <end position="48" status="greater than"/>
    </location>
</feature>
<feature type="propeptide" id="PRO_0000036342">
    <location>
        <begin position="49" status="less than"/>
        <end position="71" status="greater than"/>
    </location>
</feature>
<feature type="peptide" id="PRO_0000036343" description="Urotensin-2 beta">
    <location>
        <begin position="72"/>
        <end position="83"/>
    </location>
</feature>
<feature type="disulfide bond">
    <location>
        <begin position="77"/>
        <end position="82"/>
    </location>
</feature>
<feature type="non-consecutive residues" evidence="2">
    <location>
        <begin position="48"/>
        <end position="49"/>
    </location>
</feature>
<feature type="non-consecutive residues" evidence="2">
    <location>
        <begin position="71"/>
        <end position="72"/>
    </location>
</feature>
<feature type="non-terminal residue">
    <location>
        <position position="1"/>
    </location>
</feature>
<dbReference type="PIR" id="S10706">
    <property type="entry name" value="S10706"/>
</dbReference>
<dbReference type="GO" id="GO:0005576">
    <property type="term" value="C:extracellular region"/>
    <property type="evidence" value="ECO:0007669"/>
    <property type="project" value="UniProtKB-SubCell"/>
</dbReference>
<dbReference type="GO" id="GO:0005179">
    <property type="term" value="F:hormone activity"/>
    <property type="evidence" value="ECO:0007669"/>
    <property type="project" value="UniProtKB-KW"/>
</dbReference>
<dbReference type="GO" id="GO:0097746">
    <property type="term" value="P:blood vessel diameter maintenance"/>
    <property type="evidence" value="ECO:0007669"/>
    <property type="project" value="InterPro"/>
</dbReference>
<dbReference type="GO" id="GO:0008217">
    <property type="term" value="P:regulation of blood pressure"/>
    <property type="evidence" value="ECO:0007669"/>
    <property type="project" value="InterPro"/>
</dbReference>
<dbReference type="InterPro" id="IPR001483">
    <property type="entry name" value="Urotensin_II"/>
</dbReference>
<dbReference type="Pfam" id="PF02083">
    <property type="entry name" value="Urotensin_II"/>
    <property type="match status" value="1"/>
</dbReference>
<dbReference type="PROSITE" id="PS00984">
    <property type="entry name" value="UROTENSIN_II"/>
    <property type="match status" value="1"/>
</dbReference>
<reference key="1">
    <citation type="journal article" date="1990" name="FEBS Lett.">
        <title>Post-translational processing of prepro-urotensin II.</title>
        <authorList>
            <person name="Conlon J.M."/>
            <person name="Arnold-Reed D.E."/>
            <person name="Balment R.J."/>
        </authorList>
    </citation>
    <scope>PROTEIN SEQUENCE</scope>
    <source>
        <tissue>Urophysis</tissue>
    </source>
</reference>
<accession>P21857</accession>
<proteinExistence type="evidence at protein level"/>